<reference key="1">
    <citation type="journal article" date="1997" name="Int. J. Biochem. Cell Biol.">
        <title>Molecular cloning of diadenosine tetraphosphatase from pig small intestinal mucosa and identification of sequence blocks common to diadenosine polyphosphate hydrolases and phosphorylases.</title>
        <authorList>
            <person name="Hankin S."/>
            <person name="Winteroe A.K."/>
            <person name="McLennan A.G."/>
        </authorList>
    </citation>
    <scope>NUCLEOTIDE SEQUENCE [MRNA]</scope>
    <scope>FUNCTION</scope>
    <scope>CATALYTIC ACTIVITY</scope>
    <scope>BIOPHYSICOCHEMICAL PROPERTIES</scope>
    <scope>ACTIVITY REGULATION</scope>
    <source>
        <tissue>Small intestine</tissue>
    </source>
</reference>
<comment type="function">
    <text evidence="2 5">Catalyzes the asymmetric hydrolysis of diadenosine 5',5'''-P1,P4-tetraphosphate (Ap4A) to yield AMP and ATP (PubMed:9147133). Exhibits decapping activity towards FAD-capped RNAs and dpCoA-capped RNAs in vitro (By similarity).</text>
</comment>
<comment type="catalytic activity">
    <reaction evidence="5">
        <text>P(1),P(4)-bis(5'-guanosyl) tetraphosphate + H2O = GMP + GTP + 2 H(+)</text>
        <dbReference type="Rhea" id="RHEA:22484"/>
        <dbReference type="ChEBI" id="CHEBI:15377"/>
        <dbReference type="ChEBI" id="CHEBI:15378"/>
        <dbReference type="ChEBI" id="CHEBI:37565"/>
        <dbReference type="ChEBI" id="CHEBI:57553"/>
        <dbReference type="ChEBI" id="CHEBI:58115"/>
        <dbReference type="EC" id="3.6.1.17"/>
    </reaction>
</comment>
<comment type="catalytic activity">
    <reaction evidence="2">
        <text>a 5'-end CoA-ribonucleoside in mRNA + H2O = a 5'-end phospho-adenosine-phospho-ribonucleoside in mRNA + (R)-4'-phosphopantetheine + 2 H(+)</text>
        <dbReference type="Rhea" id="RHEA:67592"/>
        <dbReference type="Rhea" id="RHEA-COMP:15719"/>
        <dbReference type="Rhea" id="RHEA-COMP:17276"/>
        <dbReference type="ChEBI" id="CHEBI:15377"/>
        <dbReference type="ChEBI" id="CHEBI:15378"/>
        <dbReference type="ChEBI" id="CHEBI:61723"/>
        <dbReference type="ChEBI" id="CHEBI:144051"/>
        <dbReference type="ChEBI" id="CHEBI:172371"/>
    </reaction>
    <physiologicalReaction direction="left-to-right" evidence="2">
        <dbReference type="Rhea" id="RHEA:67593"/>
    </physiologicalReaction>
</comment>
<comment type="catalytic activity">
    <reaction evidence="2">
        <text>a 5'-end FAD-phospho-ribonucleoside in mRNA + H2O = a 5'-end phospho-adenosine-phospho-ribonucleoside in mRNA + FMN + 2 H(+)</text>
        <dbReference type="Rhea" id="RHEA:67588"/>
        <dbReference type="Rhea" id="RHEA-COMP:15719"/>
        <dbReference type="Rhea" id="RHEA-COMP:17275"/>
        <dbReference type="ChEBI" id="CHEBI:15377"/>
        <dbReference type="ChEBI" id="CHEBI:15378"/>
        <dbReference type="ChEBI" id="CHEBI:58210"/>
        <dbReference type="ChEBI" id="CHEBI:144051"/>
        <dbReference type="ChEBI" id="CHEBI:172372"/>
    </reaction>
    <physiologicalReaction direction="left-to-right" evidence="2">
        <dbReference type="Rhea" id="RHEA:67589"/>
    </physiologicalReaction>
</comment>
<comment type="cofactor">
    <cofactor evidence="3">
        <name>a divalent metal cation</name>
        <dbReference type="ChEBI" id="CHEBI:60240"/>
    </cofactor>
    <text evidence="3">Divalent metal ions.</text>
</comment>
<comment type="activity regulation">
    <text evidence="5">Inhibited by fluoride ions.</text>
</comment>
<comment type="biophysicochemical properties">
    <kinetics>
        <KM evidence="5">0.8 uM for P(1),P(4)-bis(5'-guanosyl) tetraphosphate</KM>
    </kinetics>
</comment>
<comment type="similarity">
    <text evidence="6">Belongs to the Nudix hydrolase family.</text>
</comment>
<keyword id="KW-0007">Acetylation</keyword>
<keyword id="KW-0342">GTP-binding</keyword>
<keyword id="KW-0378">Hydrolase</keyword>
<keyword id="KW-0547">Nucleotide-binding</keyword>
<keyword id="KW-1185">Reference proteome</keyword>
<name>AP4A_PIG</name>
<dbReference type="EC" id="3.6.1.17" evidence="5"/>
<dbReference type="EMBL" id="U38619">
    <property type="protein sequence ID" value="AAB61380.1"/>
    <property type="molecule type" value="mRNA"/>
</dbReference>
<dbReference type="RefSeq" id="NP_999474.1">
    <property type="nucleotide sequence ID" value="NM_214309.2"/>
</dbReference>
<dbReference type="RefSeq" id="XP_005668113.1">
    <property type="nucleotide sequence ID" value="XM_005668056.3"/>
</dbReference>
<dbReference type="RefSeq" id="XP_005668114.1">
    <property type="nucleotide sequence ID" value="XM_005668057.2"/>
</dbReference>
<dbReference type="RefSeq" id="XP_013835621.1">
    <property type="nucleotide sequence ID" value="XM_013980167.1"/>
</dbReference>
<dbReference type="SMR" id="P50584"/>
<dbReference type="FunCoup" id="P50584">
    <property type="interactions" value="766"/>
</dbReference>
<dbReference type="STRING" id="9823.ENSSSCP00000011711"/>
<dbReference type="PaxDb" id="9823-ENSSSCP00000011711"/>
<dbReference type="PeptideAtlas" id="P50584"/>
<dbReference type="Ensembl" id="ENSSSCT00000012019.3">
    <property type="protein sequence ID" value="ENSSSCP00000011711.1"/>
    <property type="gene ID" value="ENSSSCG00000010981.4"/>
</dbReference>
<dbReference type="Ensembl" id="ENSSSCT00015019567.1">
    <property type="protein sequence ID" value="ENSSSCP00015007675.1"/>
    <property type="gene ID" value="ENSSSCG00015014742.1"/>
</dbReference>
<dbReference type="Ensembl" id="ENSSSCT00015019611.1">
    <property type="protein sequence ID" value="ENSSSCP00015007694.1"/>
    <property type="gene ID" value="ENSSSCG00015014742.1"/>
</dbReference>
<dbReference type="Ensembl" id="ENSSSCT00030070607.1">
    <property type="protein sequence ID" value="ENSSSCP00030032215.1"/>
    <property type="gene ID" value="ENSSSCG00030050634.1"/>
</dbReference>
<dbReference type="Ensembl" id="ENSSSCT00035066313.1">
    <property type="protein sequence ID" value="ENSSSCP00035026891.1"/>
    <property type="gene ID" value="ENSSSCG00035049766.1"/>
</dbReference>
<dbReference type="Ensembl" id="ENSSSCT00040041110.1">
    <property type="protein sequence ID" value="ENSSSCP00040017214.1"/>
    <property type="gene ID" value="ENSSSCG00040030545.1"/>
</dbReference>
<dbReference type="Ensembl" id="ENSSSCT00045003594.1">
    <property type="protein sequence ID" value="ENSSSCP00045002269.1"/>
    <property type="gene ID" value="ENSSSCG00045002295.1"/>
</dbReference>
<dbReference type="Ensembl" id="ENSSSCT00055031600.1">
    <property type="protein sequence ID" value="ENSSSCP00055025148.1"/>
    <property type="gene ID" value="ENSSSCG00055016025.1"/>
</dbReference>
<dbReference type="Ensembl" id="ENSSSCT00065050378.1">
    <property type="protein sequence ID" value="ENSSSCP00065021827.1"/>
    <property type="gene ID" value="ENSSSCG00065036918.1"/>
</dbReference>
<dbReference type="Ensembl" id="ENSSSCT00070038135.1">
    <property type="protein sequence ID" value="ENSSSCP00070031914.1"/>
    <property type="gene ID" value="ENSSSCG00070019290.1"/>
</dbReference>
<dbReference type="Ensembl" id="ENSSSCT00070038146.1">
    <property type="protein sequence ID" value="ENSSSCP00070031926.1"/>
    <property type="gene ID" value="ENSSSCG00070019290.1"/>
</dbReference>
<dbReference type="Ensembl" id="ENSSSCT00070038150.1">
    <property type="protein sequence ID" value="ENSSSCP00070031930.1"/>
    <property type="gene ID" value="ENSSSCG00070019290.1"/>
</dbReference>
<dbReference type="Ensembl" id="ENSSSCT00085001517">
    <property type="protein sequence ID" value="ENSSSCP00085001113"/>
    <property type="gene ID" value="ENSSSCG00085001115"/>
</dbReference>
<dbReference type="Ensembl" id="ENSSSCT00090024630">
    <property type="protein sequence ID" value="ENSSSCP00090015311"/>
    <property type="gene ID" value="ENSSSCG00090014029"/>
</dbReference>
<dbReference type="Ensembl" id="ENSSSCT00105051352">
    <property type="protein sequence ID" value="ENSSSCP00105036182"/>
    <property type="gene ID" value="ENSSSCG00105027052"/>
</dbReference>
<dbReference type="Ensembl" id="ENSSSCT00110040032">
    <property type="protein sequence ID" value="ENSSSCP00110027849"/>
    <property type="gene ID" value="ENSSSCG00110020784"/>
</dbReference>
<dbReference type="Ensembl" id="ENSSSCT00115014420">
    <property type="protein sequence ID" value="ENSSSCP00115013617"/>
    <property type="gene ID" value="ENSSSCG00115008262"/>
</dbReference>
<dbReference type="Ensembl" id="ENSSSCT00130040668">
    <property type="protein sequence ID" value="ENSSSCP00130028646"/>
    <property type="gene ID" value="ENSSSCG00130020975"/>
</dbReference>
<dbReference type="GeneID" id="397577"/>
<dbReference type="KEGG" id="ssc:397577"/>
<dbReference type="CTD" id="318"/>
<dbReference type="VGNC" id="VGNC:96457">
    <property type="gene designation" value="NUDT2"/>
</dbReference>
<dbReference type="eggNOG" id="KOG2839">
    <property type="taxonomic scope" value="Eukaryota"/>
</dbReference>
<dbReference type="GeneTree" id="ENSGT00390000002416"/>
<dbReference type="HOGENOM" id="CLU_037162_14_5_1"/>
<dbReference type="InParanoid" id="P50584"/>
<dbReference type="OMA" id="WRDYEQA"/>
<dbReference type="OrthoDB" id="276276at2759"/>
<dbReference type="TreeFam" id="TF105958"/>
<dbReference type="Reactome" id="R-SSC-3299685">
    <property type="pathway name" value="Detoxification of Reactive Oxygen Species"/>
</dbReference>
<dbReference type="Proteomes" id="UP000008227">
    <property type="component" value="Chromosome 10"/>
</dbReference>
<dbReference type="Proteomes" id="UP000314985">
    <property type="component" value="Chromosome 10"/>
</dbReference>
<dbReference type="Proteomes" id="UP000694570">
    <property type="component" value="Unplaced"/>
</dbReference>
<dbReference type="Proteomes" id="UP000694571">
    <property type="component" value="Unplaced"/>
</dbReference>
<dbReference type="Proteomes" id="UP000694720">
    <property type="component" value="Unplaced"/>
</dbReference>
<dbReference type="Proteomes" id="UP000694722">
    <property type="component" value="Unplaced"/>
</dbReference>
<dbReference type="Proteomes" id="UP000694723">
    <property type="component" value="Unplaced"/>
</dbReference>
<dbReference type="Proteomes" id="UP000694724">
    <property type="component" value="Unplaced"/>
</dbReference>
<dbReference type="Proteomes" id="UP000694725">
    <property type="component" value="Unplaced"/>
</dbReference>
<dbReference type="Proteomes" id="UP000694726">
    <property type="component" value="Unplaced"/>
</dbReference>
<dbReference type="Proteomes" id="UP000694727">
    <property type="component" value="Unplaced"/>
</dbReference>
<dbReference type="Proteomes" id="UP000694728">
    <property type="component" value="Unplaced"/>
</dbReference>
<dbReference type="Bgee" id="ENSSSCG00000010981">
    <property type="expression patterns" value="Expressed in longissimus lumborum muscle and 46 other cell types or tissues"/>
</dbReference>
<dbReference type="ExpressionAtlas" id="P50584">
    <property type="expression patterns" value="baseline and differential"/>
</dbReference>
<dbReference type="GO" id="GO:0004081">
    <property type="term" value="F:bis(5'-nucleosyl)-tetraphosphatase (asymmetrical) activity"/>
    <property type="evidence" value="ECO:0000314"/>
    <property type="project" value="UniProtKB"/>
</dbReference>
<dbReference type="GO" id="GO:0005525">
    <property type="term" value="F:GTP binding"/>
    <property type="evidence" value="ECO:0007669"/>
    <property type="project" value="UniProtKB-KW"/>
</dbReference>
<dbReference type="GO" id="GO:0006167">
    <property type="term" value="P:AMP biosynthetic process"/>
    <property type="evidence" value="ECO:0000318"/>
    <property type="project" value="GO_Central"/>
</dbReference>
<dbReference type="GO" id="GO:0006915">
    <property type="term" value="P:apoptotic process"/>
    <property type="evidence" value="ECO:0000250"/>
    <property type="project" value="UniProtKB"/>
</dbReference>
<dbReference type="GO" id="GO:0006754">
    <property type="term" value="P:ATP biosynthetic process"/>
    <property type="evidence" value="ECO:0000318"/>
    <property type="project" value="GO_Central"/>
</dbReference>
<dbReference type="CDD" id="cd03428">
    <property type="entry name" value="NUDIX_Ap4A_Nudt2"/>
    <property type="match status" value="1"/>
</dbReference>
<dbReference type="FunFam" id="3.90.79.10:FF:000037">
    <property type="entry name" value="Nudix hydrolase 2"/>
    <property type="match status" value="1"/>
</dbReference>
<dbReference type="Gene3D" id="3.90.79.10">
    <property type="entry name" value="Nucleoside Triphosphate Pyrophosphohydrolase"/>
    <property type="match status" value="1"/>
</dbReference>
<dbReference type="InterPro" id="IPR015797">
    <property type="entry name" value="NUDIX_hydrolase-like_dom_sf"/>
</dbReference>
<dbReference type="InterPro" id="IPR020084">
    <property type="entry name" value="NUDIX_hydrolase_CS"/>
</dbReference>
<dbReference type="InterPro" id="IPR000086">
    <property type="entry name" value="NUDIX_hydrolase_dom"/>
</dbReference>
<dbReference type="InterPro" id="IPR051325">
    <property type="entry name" value="Nudix_hydrolase_domain"/>
</dbReference>
<dbReference type="InterPro" id="IPR003565">
    <property type="entry name" value="Tetra_PHTase"/>
</dbReference>
<dbReference type="PANTHER" id="PTHR21340:SF0">
    <property type="entry name" value="BIS(5'-NUCLEOSYL)-TETRAPHOSPHATASE [ASYMMETRICAL]"/>
    <property type="match status" value="1"/>
</dbReference>
<dbReference type="PANTHER" id="PTHR21340">
    <property type="entry name" value="DIADENOSINE 5,5-P1,P4-TETRAPHOSPHATE PYROPHOSPHOHYDROLASE MUTT"/>
    <property type="match status" value="1"/>
</dbReference>
<dbReference type="Pfam" id="PF00293">
    <property type="entry name" value="NUDIX"/>
    <property type="match status" value="1"/>
</dbReference>
<dbReference type="PRINTS" id="PR01405">
    <property type="entry name" value="TETRPHPHTASE"/>
</dbReference>
<dbReference type="SUPFAM" id="SSF55811">
    <property type="entry name" value="Nudix"/>
    <property type="match status" value="1"/>
</dbReference>
<dbReference type="PROSITE" id="PS51462">
    <property type="entry name" value="NUDIX"/>
    <property type="match status" value="1"/>
</dbReference>
<dbReference type="PROSITE" id="PS00893">
    <property type="entry name" value="NUDIX_BOX"/>
    <property type="match status" value="1"/>
</dbReference>
<proteinExistence type="evidence at protein level"/>
<feature type="initiator methionine" description="Removed" evidence="1">
    <location>
        <position position="1"/>
    </location>
</feature>
<feature type="chain" id="PRO_0000057104" description="Bis(5'-nucleosyl)-tetraphosphatase [asymmetrical]">
    <location>
        <begin position="2"/>
        <end position="147"/>
    </location>
</feature>
<feature type="domain" description="Nudix hydrolase" evidence="4">
    <location>
        <begin position="2"/>
        <end position="139"/>
    </location>
</feature>
<feature type="short sequence motif" description="Nudix box">
    <location>
        <begin position="43"/>
        <end position="64"/>
    </location>
</feature>
<feature type="modified residue" description="N-acetylalanine" evidence="1">
    <location>
        <position position="2"/>
    </location>
</feature>
<organism>
    <name type="scientific">Sus scrofa</name>
    <name type="common">Pig</name>
    <dbReference type="NCBI Taxonomy" id="9823"/>
    <lineage>
        <taxon>Eukaryota</taxon>
        <taxon>Metazoa</taxon>
        <taxon>Chordata</taxon>
        <taxon>Craniata</taxon>
        <taxon>Vertebrata</taxon>
        <taxon>Euteleostomi</taxon>
        <taxon>Mammalia</taxon>
        <taxon>Eutheria</taxon>
        <taxon>Laurasiatheria</taxon>
        <taxon>Artiodactyla</taxon>
        <taxon>Suina</taxon>
        <taxon>Suidae</taxon>
        <taxon>Sus</taxon>
    </lineage>
</organism>
<evidence type="ECO:0000250" key="1">
    <source>
        <dbReference type="UniProtKB" id="P50583"/>
    </source>
</evidence>
<evidence type="ECO:0000250" key="2">
    <source>
        <dbReference type="UniProtKB" id="P56380"/>
    </source>
</evidence>
<evidence type="ECO:0000250" key="3">
    <source>
        <dbReference type="UniProtKB" id="Q9U2M7"/>
    </source>
</evidence>
<evidence type="ECO:0000255" key="4">
    <source>
        <dbReference type="PROSITE-ProRule" id="PRU00794"/>
    </source>
</evidence>
<evidence type="ECO:0000269" key="5">
    <source>
    </source>
</evidence>
<evidence type="ECO:0000305" key="6"/>
<protein>
    <recommendedName>
        <fullName>Bis(5'-nucleosyl)-tetraphosphatase [asymmetrical]</fullName>
        <ecNumber evidence="5">3.6.1.17</ecNumber>
    </recommendedName>
    <alternativeName>
        <fullName>Diadenosine 5',5'''-P1,P4-tetraphosphate asymmetrical hydrolase</fullName>
        <shortName>Ap4A hydrolase</shortName>
        <shortName>Ap4Aase</shortName>
        <shortName>Diadenosine tetraphosphatase</shortName>
    </alternativeName>
    <alternativeName>
        <fullName>Nucleoside diphosphate-linked moiety X motif 2</fullName>
        <shortName>Nudix motif 2</shortName>
    </alternativeName>
</protein>
<sequence length="147" mass="16835">MALRACGLIIFRRRLIPKVDNTAIEFLLLQASNGIHHWTPPKGHVEPGESDLQTALRETQEEAGIDAGQLTIIEGFRKELNYVAWEKPKTVIYWLAEVKDYDVEVRLSREHQAYRWLGLDEACQLAQFKDMKAVLQEGHQFLCSMAA</sequence>
<gene>
    <name type="primary">NUDT2</name>
    <name type="synonym">APAH1</name>
</gene>
<accession>P50584</accession>